<sequence>MPSIRVLFVLLAVILLFMEVKMTSAASIVKDVDEDETLENEDGEAMENSWPWHGVEDTSDYSDLSDLANSEKRGTCIDLGSRLYCKLIRRRGMCRSRSHRARIAMMRCERSCGRCHL</sequence>
<evidence type="ECO:0000250" key="1">
    <source>
        <dbReference type="UniProtKB" id="P29187"/>
    </source>
</evidence>
<evidence type="ECO:0000255" key="2"/>
<evidence type="ECO:0000269" key="3">
    <source>
    </source>
</evidence>
<evidence type="ECO:0000303" key="4">
    <source>
    </source>
</evidence>
<evidence type="ECO:0000305" key="5"/>
<evidence type="ECO:0000305" key="6">
    <source>
    </source>
</evidence>
<proteinExistence type="evidence at protein level"/>
<dbReference type="RefSeq" id="XP_029188806.1">
    <property type="nucleotide sequence ID" value="XM_029332973.2"/>
</dbReference>
<dbReference type="SMR" id="P0DUG2"/>
<dbReference type="EnsemblMetazoa" id="XM_029332973.2">
    <property type="protein sequence ID" value="XP_029188806.1"/>
    <property type="gene ID" value="LOC114955989"/>
</dbReference>
<dbReference type="GeneID" id="114955989"/>
<dbReference type="GO" id="GO:0005576">
    <property type="term" value="C:extracellular region"/>
    <property type="evidence" value="ECO:0007669"/>
    <property type="project" value="UniProtKB-SubCell"/>
</dbReference>
<dbReference type="GO" id="GO:0042742">
    <property type="term" value="P:defense response to bacterium"/>
    <property type="evidence" value="ECO:0007669"/>
    <property type="project" value="UniProtKB-KW"/>
</dbReference>
<accession>P0DUG2</accession>
<reference key="1">
    <citation type="journal article" date="2021" name="Dev. Comp. Immunol.">
        <title>AmAMP1 from Acropora millepora and damicornin define a family of coral-specific antimicrobial peptides related to the Shk toxins of sea anemones.</title>
        <authorList>
            <person name="Mason B."/>
            <person name="Cooke I."/>
            <person name="Moya A."/>
            <person name="Augustin R."/>
            <person name="Lin M.F."/>
            <person name="Satoh N."/>
            <person name="Bosch T.C.G."/>
            <person name="Bourne D.G."/>
            <person name="Hayward D.C."/>
            <person name="Andrade N."/>
            <person name="Foret S."/>
            <person name="Ying H."/>
            <person name="Ball E.E."/>
            <person name="Miller D.J."/>
        </authorList>
    </citation>
    <scope>NUCLEOTIDE SEQUENCE [GENOMIC DNA]</scope>
    <scope>FUNCTION</scope>
    <scope>SYNTHESIS OF 73-117 AND 74-117</scope>
    <scope>BIOPHYSICOCHEMICAL PROPERTIES</scope>
    <scope>DEVELOPMENTAL STAGE</scope>
</reference>
<comment type="function">
    <text evidence="3">Coral peptide that probably acts as an antimicrobial peptide in the surface mucous layer of planula larvae and likely also in adults. Shows moderate to high activity against some Gram-negative and Gram-positive bacteria (tested on E.coli, B.megaterium, S.aureus, E.aesturaii, B.algicola, Acinetobacter spec.). Does not show antibacterial activity against the coral pathogen V.coralliilyticus.</text>
</comment>
<comment type="biophysicochemical properties">
    <phDependence>
        <text evidence="3">Shows more potent antibacterial activity at pH 6.2 (approximate coral mucus pH) than at pH 8.0 (approximate pH of seawater).</text>
    </phDependence>
</comment>
<comment type="subcellular location">
    <subcellularLocation>
        <location evidence="6">Secreted</location>
    </subcellularLocation>
</comment>
<comment type="developmental stage">
    <text evidence="3">Expressed at late stages of coral development (late planula, polyps, and adults), in ectodermal cells.</text>
</comment>
<comment type="similarity">
    <text evidence="5">Belongs to the coral AMP family.</text>
</comment>
<comment type="online information" name="National Center for Biotechnology Information (NCBI)">
    <link uri="https://www.ncbi.nlm.nih.gov/nuccore/NW_021126416.1?report=genbank&amp;from=263881&amp;to=267654"/>
</comment>
<organism>
    <name type="scientific">Acropora millepora</name>
    <name type="common">Staghorn coral</name>
    <name type="synonym">Heteropora millepora</name>
    <dbReference type="NCBI Taxonomy" id="45264"/>
    <lineage>
        <taxon>Eukaryota</taxon>
        <taxon>Metazoa</taxon>
        <taxon>Cnidaria</taxon>
        <taxon>Anthozoa</taxon>
        <taxon>Hexacorallia</taxon>
        <taxon>Scleractinia</taxon>
        <taxon>Astrocoeniina</taxon>
        <taxon>Acroporidae</taxon>
        <taxon>Acropora</taxon>
    </lineage>
</organism>
<name>AMP1_ACRMI</name>
<feature type="signal peptide" evidence="2">
    <location>
        <begin position="1"/>
        <end position="25"/>
    </location>
</feature>
<feature type="propeptide" id="PRO_0000452122" evidence="6">
    <location>
        <begin position="26"/>
        <end position="73"/>
    </location>
</feature>
<feature type="chain" id="PRO_0000452123" description="Antimicrobial peptide AmAMP1" evidence="6">
    <location>
        <begin position="74"/>
        <end position="117"/>
    </location>
</feature>
<feature type="disulfide bond" evidence="1">
    <location>
        <begin position="76"/>
        <end position="115"/>
    </location>
</feature>
<feature type="disulfide bond" evidence="1">
    <location>
        <begin position="85"/>
        <end position="108"/>
    </location>
</feature>
<feature type="disulfide bond" evidence="1">
    <location>
        <begin position="94"/>
        <end position="112"/>
    </location>
</feature>
<protein>
    <recommendedName>
        <fullName evidence="4">Antimicrobial peptide AmAMP1</fullName>
    </recommendedName>
</protein>
<keyword id="KW-0044">Antibiotic</keyword>
<keyword id="KW-0929">Antimicrobial</keyword>
<keyword id="KW-0165">Cleavage on pair of basic residues</keyword>
<keyword id="KW-1015">Disulfide bond</keyword>
<keyword id="KW-0964">Secreted</keyword>
<keyword id="KW-0732">Signal</keyword>